<organism>
    <name type="scientific">Paraburkholderia phytofirmans (strain DSM 17436 / LMG 22146 / PsJN)</name>
    <name type="common">Burkholderia phytofirmans</name>
    <dbReference type="NCBI Taxonomy" id="398527"/>
    <lineage>
        <taxon>Bacteria</taxon>
        <taxon>Pseudomonadati</taxon>
        <taxon>Pseudomonadota</taxon>
        <taxon>Betaproteobacteria</taxon>
        <taxon>Burkholderiales</taxon>
        <taxon>Burkholderiaceae</taxon>
        <taxon>Paraburkholderia</taxon>
    </lineage>
</organism>
<proteinExistence type="inferred from homology"/>
<dbReference type="EC" id="5.3.1.17" evidence="1"/>
<dbReference type="EMBL" id="CP001052">
    <property type="protein sequence ID" value="ACD16606.1"/>
    <property type="molecule type" value="Genomic_DNA"/>
</dbReference>
<dbReference type="RefSeq" id="WP_012433204.1">
    <property type="nucleotide sequence ID" value="NC_010681.1"/>
</dbReference>
<dbReference type="SMR" id="B2T4U5"/>
<dbReference type="STRING" id="398527.Bphyt_2206"/>
<dbReference type="KEGG" id="bpy:Bphyt_2206"/>
<dbReference type="eggNOG" id="COG3717">
    <property type="taxonomic scope" value="Bacteria"/>
</dbReference>
<dbReference type="HOGENOM" id="CLU_062609_0_0_4"/>
<dbReference type="OrthoDB" id="9770644at2"/>
<dbReference type="UniPathway" id="UPA00545">
    <property type="reaction ID" value="UER00826"/>
</dbReference>
<dbReference type="Proteomes" id="UP000001739">
    <property type="component" value="Chromosome 1"/>
</dbReference>
<dbReference type="GO" id="GO:0008697">
    <property type="term" value="F:4-deoxy-L-threo-5-hexosulose-uronate ketol-isomerase activity"/>
    <property type="evidence" value="ECO:0007669"/>
    <property type="project" value="UniProtKB-UniRule"/>
</dbReference>
<dbReference type="GO" id="GO:0008270">
    <property type="term" value="F:zinc ion binding"/>
    <property type="evidence" value="ECO:0007669"/>
    <property type="project" value="UniProtKB-UniRule"/>
</dbReference>
<dbReference type="GO" id="GO:0019698">
    <property type="term" value="P:D-galacturonate catabolic process"/>
    <property type="evidence" value="ECO:0007669"/>
    <property type="project" value="TreeGrafter"/>
</dbReference>
<dbReference type="GO" id="GO:0042840">
    <property type="term" value="P:D-glucuronate catabolic process"/>
    <property type="evidence" value="ECO:0007669"/>
    <property type="project" value="TreeGrafter"/>
</dbReference>
<dbReference type="GO" id="GO:0045490">
    <property type="term" value="P:pectin catabolic process"/>
    <property type="evidence" value="ECO:0007669"/>
    <property type="project" value="UniProtKB-UniRule"/>
</dbReference>
<dbReference type="CDD" id="cd20491">
    <property type="entry name" value="cupin_KduI_C"/>
    <property type="match status" value="1"/>
</dbReference>
<dbReference type="CDD" id="cd20294">
    <property type="entry name" value="cupin_KduI_N"/>
    <property type="match status" value="1"/>
</dbReference>
<dbReference type="FunFam" id="2.60.120.10:FF:000018">
    <property type="entry name" value="4-deoxy-L-threo-5-hexosulose-uronate ketol-isomerase"/>
    <property type="match status" value="1"/>
</dbReference>
<dbReference type="Gene3D" id="2.60.120.10">
    <property type="entry name" value="Jelly Rolls"/>
    <property type="match status" value="1"/>
</dbReference>
<dbReference type="Gene3D" id="2.60.120.520">
    <property type="entry name" value="pectin degrading enzyme 5-keto 4- deoxyuronate isomerase, domain 1"/>
    <property type="match status" value="1"/>
</dbReference>
<dbReference type="HAMAP" id="MF_00687">
    <property type="entry name" value="KduI"/>
    <property type="match status" value="1"/>
</dbReference>
<dbReference type="InterPro" id="IPR007045">
    <property type="entry name" value="KduI"/>
</dbReference>
<dbReference type="InterPro" id="IPR021120">
    <property type="entry name" value="KduI/IolB_isomerase"/>
</dbReference>
<dbReference type="InterPro" id="IPR027449">
    <property type="entry name" value="KduI_N"/>
</dbReference>
<dbReference type="InterPro" id="IPR014710">
    <property type="entry name" value="RmlC-like_jellyroll"/>
</dbReference>
<dbReference type="InterPro" id="IPR011051">
    <property type="entry name" value="RmlC_Cupin_sf"/>
</dbReference>
<dbReference type="NCBIfam" id="NF002091">
    <property type="entry name" value="PRK00924.1"/>
    <property type="match status" value="1"/>
</dbReference>
<dbReference type="PANTHER" id="PTHR38461">
    <property type="entry name" value="4-DEOXY-L-THREO-5-HEXOSULOSE-URONATE KETOL-ISOMERASE"/>
    <property type="match status" value="1"/>
</dbReference>
<dbReference type="PANTHER" id="PTHR38461:SF1">
    <property type="entry name" value="4-DEOXY-L-THREO-5-HEXOSULOSE-URONATE KETOL-ISOMERASE"/>
    <property type="match status" value="1"/>
</dbReference>
<dbReference type="Pfam" id="PF04962">
    <property type="entry name" value="KduI"/>
    <property type="match status" value="1"/>
</dbReference>
<dbReference type="PIRSF" id="PIRSF006625">
    <property type="entry name" value="KduI"/>
    <property type="match status" value="1"/>
</dbReference>
<dbReference type="SUPFAM" id="SSF51182">
    <property type="entry name" value="RmlC-like cupins"/>
    <property type="match status" value="1"/>
</dbReference>
<keyword id="KW-0413">Isomerase</keyword>
<keyword id="KW-0479">Metal-binding</keyword>
<keyword id="KW-0862">Zinc</keyword>
<name>KDUI_PARPJ</name>
<evidence type="ECO:0000255" key="1">
    <source>
        <dbReference type="HAMAP-Rule" id="MF_00687"/>
    </source>
</evidence>
<reference key="1">
    <citation type="journal article" date="2011" name="J. Bacteriol.">
        <title>Complete genome sequence of the plant growth-promoting endophyte Burkholderia phytofirmans strain PsJN.</title>
        <authorList>
            <person name="Weilharter A."/>
            <person name="Mitter B."/>
            <person name="Shin M.V."/>
            <person name="Chain P.S."/>
            <person name="Nowak J."/>
            <person name="Sessitsch A."/>
        </authorList>
    </citation>
    <scope>NUCLEOTIDE SEQUENCE [LARGE SCALE GENOMIC DNA]</scope>
    <source>
        <strain>DSM 17436 / LMG 22146 / PsJN</strain>
    </source>
</reference>
<gene>
    <name evidence="1" type="primary">kduI</name>
    <name type="ordered locus">Bphyt_2206</name>
</gene>
<comment type="function">
    <text evidence="1">Catalyzes the isomerization of 5-dehydro-4-deoxy-D-glucuronate to 3-deoxy-D-glycero-2,5-hexodiulosonate.</text>
</comment>
<comment type="catalytic activity">
    <reaction evidence="1">
        <text>5-dehydro-4-deoxy-D-glucuronate = 3-deoxy-D-glycero-2,5-hexodiulosonate</text>
        <dbReference type="Rhea" id="RHEA:23896"/>
        <dbReference type="ChEBI" id="CHEBI:17117"/>
        <dbReference type="ChEBI" id="CHEBI:29071"/>
        <dbReference type="EC" id="5.3.1.17"/>
    </reaction>
</comment>
<comment type="cofactor">
    <cofactor evidence="1">
        <name>Zn(2+)</name>
        <dbReference type="ChEBI" id="CHEBI:29105"/>
    </cofactor>
    <text evidence="1">Binds 1 zinc ion per subunit.</text>
</comment>
<comment type="pathway">
    <text evidence="1">Glycan metabolism; pectin degradation; 2-dehydro-3-deoxy-D-gluconate from pectin: step 4/5.</text>
</comment>
<comment type="similarity">
    <text evidence="1">Belongs to the KduI family.</text>
</comment>
<protein>
    <recommendedName>
        <fullName evidence="1">4-deoxy-L-threo-5-hexosulose-uronate ketol-isomerase</fullName>
        <ecNumber evidence="1">5.3.1.17</ecNumber>
    </recommendedName>
    <alternativeName>
        <fullName evidence="1">5-keto-4-deoxyuronate isomerase</fullName>
    </alternativeName>
    <alternativeName>
        <fullName evidence="1">DKI isomerase</fullName>
    </alternativeName>
</protein>
<sequence length="278" mass="30890">MEVRQAINSDYAKTLDTDGLRKAFLVDQVFERDALKLTYSHIDRIIVGGVMPVARAVEVPSSLGKSIGVSYLLERRELGAINIGGDGWVDVDGTRHTVRNEEAIYIGQGTQAIAFGSDDAARPAKFYLNCAPAHTSYPTRTISLAQASPQTLGDPATSNRRTIYKFIVPEVLPTCQLSMGMTKLEPGSLWNTMPCHTHERRMEVYFYFNVADDAAVFHMMGEPNETRHILVHNEQAVISPSWSIHSGVGTRAYTFIWGMVGENQVFGDMDHIAVRDLR</sequence>
<feature type="chain" id="PRO_1000131877" description="4-deoxy-L-threo-5-hexosulose-uronate ketol-isomerase">
    <location>
        <begin position="1"/>
        <end position="278"/>
    </location>
</feature>
<feature type="binding site" evidence="1">
    <location>
        <position position="196"/>
    </location>
    <ligand>
        <name>Zn(2+)</name>
        <dbReference type="ChEBI" id="CHEBI:29105"/>
    </ligand>
</feature>
<feature type="binding site" evidence="1">
    <location>
        <position position="198"/>
    </location>
    <ligand>
        <name>Zn(2+)</name>
        <dbReference type="ChEBI" id="CHEBI:29105"/>
    </ligand>
</feature>
<feature type="binding site" evidence="1">
    <location>
        <position position="203"/>
    </location>
    <ligand>
        <name>Zn(2+)</name>
        <dbReference type="ChEBI" id="CHEBI:29105"/>
    </ligand>
</feature>
<feature type="binding site" evidence="1">
    <location>
        <position position="245"/>
    </location>
    <ligand>
        <name>Zn(2+)</name>
        <dbReference type="ChEBI" id="CHEBI:29105"/>
    </ligand>
</feature>
<accession>B2T4U5</accession>